<feature type="chain" id="PRO_0000381288" description="Biotin synthase">
    <location>
        <begin position="1"/>
        <end position="278"/>
    </location>
</feature>
<feature type="domain" description="Radical SAM core" evidence="2">
    <location>
        <begin position="1"/>
        <end position="227"/>
    </location>
</feature>
<feature type="binding site" evidence="1">
    <location>
        <position position="16"/>
    </location>
    <ligand>
        <name>[4Fe-4S] cluster</name>
        <dbReference type="ChEBI" id="CHEBI:49883"/>
        <note>4Fe-4S-S-AdoMet</note>
    </ligand>
</feature>
<feature type="binding site" evidence="1">
    <location>
        <position position="20"/>
    </location>
    <ligand>
        <name>[4Fe-4S] cluster</name>
        <dbReference type="ChEBI" id="CHEBI:49883"/>
        <note>4Fe-4S-S-AdoMet</note>
    </ligand>
</feature>
<feature type="binding site" evidence="1">
    <location>
        <position position="23"/>
    </location>
    <ligand>
        <name>[4Fe-4S] cluster</name>
        <dbReference type="ChEBI" id="CHEBI:49883"/>
        <note>4Fe-4S-S-AdoMet</note>
    </ligand>
</feature>
<feature type="binding site" evidence="1">
    <location>
        <position position="60"/>
    </location>
    <ligand>
        <name>[2Fe-2S] cluster</name>
        <dbReference type="ChEBI" id="CHEBI:190135"/>
    </ligand>
</feature>
<feature type="binding site" evidence="1">
    <location>
        <position position="95"/>
    </location>
    <ligand>
        <name>[2Fe-2S] cluster</name>
        <dbReference type="ChEBI" id="CHEBI:190135"/>
    </ligand>
</feature>
<feature type="binding site" evidence="1">
    <location>
        <position position="153"/>
    </location>
    <ligand>
        <name>[2Fe-2S] cluster</name>
        <dbReference type="ChEBI" id="CHEBI:190135"/>
    </ligand>
</feature>
<organism>
    <name type="scientific">Campylobacter jejuni (strain RM1221)</name>
    <dbReference type="NCBI Taxonomy" id="195099"/>
    <lineage>
        <taxon>Bacteria</taxon>
        <taxon>Pseudomonadati</taxon>
        <taxon>Campylobacterota</taxon>
        <taxon>Epsilonproteobacteria</taxon>
        <taxon>Campylobacterales</taxon>
        <taxon>Campylobacteraceae</taxon>
        <taxon>Campylobacter</taxon>
    </lineage>
</organism>
<dbReference type="EC" id="2.8.1.6" evidence="1"/>
<dbReference type="EMBL" id="CP000025">
    <property type="protein sequence ID" value="AAW36275.1"/>
    <property type="molecule type" value="Genomic_DNA"/>
</dbReference>
<dbReference type="RefSeq" id="WP_002867522.1">
    <property type="nucleotide sequence ID" value="NC_003912.7"/>
</dbReference>
<dbReference type="SMR" id="Q5HSB2"/>
<dbReference type="KEGG" id="cjr:CJE1853"/>
<dbReference type="HOGENOM" id="CLU_033172_2_1_7"/>
<dbReference type="UniPathway" id="UPA00078">
    <property type="reaction ID" value="UER00162"/>
</dbReference>
<dbReference type="GO" id="GO:0051537">
    <property type="term" value="F:2 iron, 2 sulfur cluster binding"/>
    <property type="evidence" value="ECO:0007669"/>
    <property type="project" value="UniProtKB-KW"/>
</dbReference>
<dbReference type="GO" id="GO:0051539">
    <property type="term" value="F:4 iron, 4 sulfur cluster binding"/>
    <property type="evidence" value="ECO:0007669"/>
    <property type="project" value="UniProtKB-KW"/>
</dbReference>
<dbReference type="GO" id="GO:0004076">
    <property type="term" value="F:biotin synthase activity"/>
    <property type="evidence" value="ECO:0007669"/>
    <property type="project" value="UniProtKB-UniRule"/>
</dbReference>
<dbReference type="GO" id="GO:0005506">
    <property type="term" value="F:iron ion binding"/>
    <property type="evidence" value="ECO:0007669"/>
    <property type="project" value="UniProtKB-UniRule"/>
</dbReference>
<dbReference type="GO" id="GO:0009102">
    <property type="term" value="P:biotin biosynthetic process"/>
    <property type="evidence" value="ECO:0007669"/>
    <property type="project" value="UniProtKB-UniRule"/>
</dbReference>
<dbReference type="CDD" id="cd01335">
    <property type="entry name" value="Radical_SAM"/>
    <property type="match status" value="1"/>
</dbReference>
<dbReference type="Gene3D" id="3.20.20.70">
    <property type="entry name" value="Aldolase class I"/>
    <property type="match status" value="1"/>
</dbReference>
<dbReference type="HAMAP" id="MF_01694">
    <property type="entry name" value="BioB"/>
    <property type="match status" value="1"/>
</dbReference>
<dbReference type="InterPro" id="IPR013785">
    <property type="entry name" value="Aldolase_TIM"/>
</dbReference>
<dbReference type="InterPro" id="IPR010722">
    <property type="entry name" value="BATS_dom"/>
</dbReference>
<dbReference type="InterPro" id="IPR002684">
    <property type="entry name" value="Biotin_synth/BioAB"/>
</dbReference>
<dbReference type="InterPro" id="IPR024177">
    <property type="entry name" value="Biotin_synthase"/>
</dbReference>
<dbReference type="InterPro" id="IPR006638">
    <property type="entry name" value="Elp3/MiaA/NifB-like_rSAM"/>
</dbReference>
<dbReference type="InterPro" id="IPR007197">
    <property type="entry name" value="rSAM"/>
</dbReference>
<dbReference type="NCBIfam" id="TIGR00433">
    <property type="entry name" value="bioB"/>
    <property type="match status" value="1"/>
</dbReference>
<dbReference type="NCBIfam" id="NF006308">
    <property type="entry name" value="PRK08508.1"/>
    <property type="match status" value="1"/>
</dbReference>
<dbReference type="PANTHER" id="PTHR22976">
    <property type="entry name" value="BIOTIN SYNTHASE"/>
    <property type="match status" value="1"/>
</dbReference>
<dbReference type="PANTHER" id="PTHR22976:SF2">
    <property type="entry name" value="BIOTIN SYNTHASE, MITOCHONDRIAL"/>
    <property type="match status" value="1"/>
</dbReference>
<dbReference type="Pfam" id="PF06968">
    <property type="entry name" value="BATS"/>
    <property type="match status" value="1"/>
</dbReference>
<dbReference type="Pfam" id="PF04055">
    <property type="entry name" value="Radical_SAM"/>
    <property type="match status" value="1"/>
</dbReference>
<dbReference type="PIRSF" id="PIRSF001619">
    <property type="entry name" value="Biotin_synth"/>
    <property type="match status" value="1"/>
</dbReference>
<dbReference type="SFLD" id="SFLDG01278">
    <property type="entry name" value="biotin_synthase_like"/>
    <property type="match status" value="1"/>
</dbReference>
<dbReference type="SFLD" id="SFLDS00029">
    <property type="entry name" value="Radical_SAM"/>
    <property type="match status" value="1"/>
</dbReference>
<dbReference type="SMART" id="SM00876">
    <property type="entry name" value="BATS"/>
    <property type="match status" value="1"/>
</dbReference>
<dbReference type="SMART" id="SM00729">
    <property type="entry name" value="Elp3"/>
    <property type="match status" value="1"/>
</dbReference>
<dbReference type="SUPFAM" id="SSF102114">
    <property type="entry name" value="Radical SAM enzymes"/>
    <property type="match status" value="1"/>
</dbReference>
<dbReference type="PROSITE" id="PS51918">
    <property type="entry name" value="RADICAL_SAM"/>
    <property type="match status" value="1"/>
</dbReference>
<reference key="1">
    <citation type="journal article" date="2005" name="PLoS Biol.">
        <title>Major structural differences and novel potential virulence mechanisms from the genomes of multiple Campylobacter species.</title>
        <authorList>
            <person name="Fouts D.E."/>
            <person name="Mongodin E.F."/>
            <person name="Mandrell R.E."/>
            <person name="Miller W.G."/>
            <person name="Rasko D.A."/>
            <person name="Ravel J."/>
            <person name="Brinkac L.M."/>
            <person name="DeBoy R.T."/>
            <person name="Parker C.T."/>
            <person name="Daugherty S.C."/>
            <person name="Dodson R.J."/>
            <person name="Durkin A.S."/>
            <person name="Madupu R."/>
            <person name="Sullivan S.A."/>
            <person name="Shetty J.U."/>
            <person name="Ayodeji M.A."/>
            <person name="Shvartsbeyn A."/>
            <person name="Schatz M.C."/>
            <person name="Badger J.H."/>
            <person name="Fraser C.M."/>
            <person name="Nelson K.E."/>
        </authorList>
    </citation>
    <scope>NUCLEOTIDE SEQUENCE [LARGE SCALE GENOMIC DNA]</scope>
    <source>
        <strain>RM1221</strain>
    </source>
</reference>
<name>BIOB_CAMJR</name>
<accession>Q5HSB2</accession>
<keyword id="KW-0001">2Fe-2S</keyword>
<keyword id="KW-0004">4Fe-4S</keyword>
<keyword id="KW-0093">Biotin biosynthesis</keyword>
<keyword id="KW-0408">Iron</keyword>
<keyword id="KW-0411">Iron-sulfur</keyword>
<keyword id="KW-0479">Metal-binding</keyword>
<keyword id="KW-0949">S-adenosyl-L-methionine</keyword>
<keyword id="KW-0808">Transferase</keyword>
<comment type="function">
    <text evidence="1">Catalyzes the conversion of dethiobiotin (DTB) to biotin by the insertion of a sulfur atom into dethiobiotin via a radical-based mechanism.</text>
</comment>
<comment type="catalytic activity">
    <reaction evidence="1">
        <text>(4R,5S)-dethiobiotin + (sulfur carrier)-SH + 2 reduced [2Fe-2S]-[ferredoxin] + 2 S-adenosyl-L-methionine = (sulfur carrier)-H + biotin + 2 5'-deoxyadenosine + 2 L-methionine + 2 oxidized [2Fe-2S]-[ferredoxin]</text>
        <dbReference type="Rhea" id="RHEA:22060"/>
        <dbReference type="Rhea" id="RHEA-COMP:10000"/>
        <dbReference type="Rhea" id="RHEA-COMP:10001"/>
        <dbReference type="Rhea" id="RHEA-COMP:14737"/>
        <dbReference type="Rhea" id="RHEA-COMP:14739"/>
        <dbReference type="ChEBI" id="CHEBI:17319"/>
        <dbReference type="ChEBI" id="CHEBI:29917"/>
        <dbReference type="ChEBI" id="CHEBI:33737"/>
        <dbReference type="ChEBI" id="CHEBI:33738"/>
        <dbReference type="ChEBI" id="CHEBI:57586"/>
        <dbReference type="ChEBI" id="CHEBI:57844"/>
        <dbReference type="ChEBI" id="CHEBI:59789"/>
        <dbReference type="ChEBI" id="CHEBI:64428"/>
        <dbReference type="ChEBI" id="CHEBI:149473"/>
        <dbReference type="EC" id="2.8.1.6"/>
    </reaction>
</comment>
<comment type="cofactor">
    <cofactor evidence="1">
        <name>[4Fe-4S] cluster</name>
        <dbReference type="ChEBI" id="CHEBI:49883"/>
    </cofactor>
    <text evidence="1">Binds 1 [4Fe-4S] cluster. The cluster is coordinated with 3 cysteines and an exchangeable S-adenosyl-L-methionine.</text>
</comment>
<comment type="cofactor">
    <cofactor evidence="1">
        <name>[2Fe-2S] cluster</name>
        <dbReference type="ChEBI" id="CHEBI:190135"/>
    </cofactor>
    <text evidence="1">Binds 1 [2Fe-2S] cluster. The cluster is coordinated with 3 cysteines and 1 arginine.</text>
</comment>
<comment type="pathway">
    <text evidence="1">Cofactor biosynthesis; biotin biosynthesis; biotin from 7,8-diaminononanoate: step 2/2.</text>
</comment>
<comment type="subunit">
    <text evidence="1">Homodimer.</text>
</comment>
<comment type="similarity">
    <text evidence="1">Belongs to the radical SAM superfamily. Biotin synthase family.</text>
</comment>
<sequence length="278" mass="30942">MQIMLCAISNIASGNCSEDCKYCTQSAHVKTDIQKYRRKELSQIVLEAKMAKKNEALGFCLVTAGLGLDDEKLEYVCEAAKAVQKEAPNLLLIACNGMASVEQLKELKKAGIFSYNHNLESSKEFFPQICTTHTWESRFQTNLNAKEAGLMLCCGGIYGMGESEEDRLSFRKSLQELQPFSTPINFFIANENLKLQVPRLSVDEALKIVRDTKEALPQSVVMVAGGREVVLRERQYEIFQAGAGAIVIGDYLTTKGEEPSQDIIKLKEMGFTFASECH</sequence>
<gene>
    <name evidence="1" type="primary">bioB</name>
    <name type="ordered locus">CJE1853</name>
</gene>
<proteinExistence type="inferred from homology"/>
<protein>
    <recommendedName>
        <fullName evidence="1">Biotin synthase</fullName>
        <ecNumber evidence="1">2.8.1.6</ecNumber>
    </recommendedName>
</protein>
<evidence type="ECO:0000255" key="1">
    <source>
        <dbReference type="HAMAP-Rule" id="MF_01694"/>
    </source>
</evidence>
<evidence type="ECO:0000255" key="2">
    <source>
        <dbReference type="PROSITE-ProRule" id="PRU01266"/>
    </source>
</evidence>